<reference key="1">
    <citation type="submission" date="2008-10" db="EMBL/GenBank/DDBJ databases">
        <title>Genome sequence of Bacillus cereus AH820.</title>
        <authorList>
            <person name="Dodson R.J."/>
            <person name="Durkin A.S."/>
            <person name="Rosovitz M.J."/>
            <person name="Rasko D.A."/>
            <person name="Hoffmaster A."/>
            <person name="Ravel J."/>
            <person name="Sutton G."/>
        </authorList>
    </citation>
    <scope>NUCLEOTIDE SEQUENCE [LARGE SCALE GENOMIC DNA]</scope>
    <source>
        <strain>AH820</strain>
    </source>
</reference>
<dbReference type="EMBL" id="CP001283">
    <property type="protein sequence ID" value="ACK87890.1"/>
    <property type="molecule type" value="Genomic_DNA"/>
</dbReference>
<dbReference type="RefSeq" id="WP_000376225.1">
    <property type="nucleotide sequence ID" value="NC_011773.1"/>
</dbReference>
<dbReference type="SMR" id="B7JL36"/>
<dbReference type="GeneID" id="45023946"/>
<dbReference type="KEGG" id="bcu:BCAH820_4077"/>
<dbReference type="HOGENOM" id="CLU_045647_5_3_9"/>
<dbReference type="Proteomes" id="UP000001363">
    <property type="component" value="Chromosome"/>
</dbReference>
<dbReference type="GO" id="GO:0005737">
    <property type="term" value="C:cytoplasm"/>
    <property type="evidence" value="ECO:0007669"/>
    <property type="project" value="UniProtKB-SubCell"/>
</dbReference>
<dbReference type="GO" id="GO:0051301">
    <property type="term" value="P:cell division"/>
    <property type="evidence" value="ECO:0007669"/>
    <property type="project" value="UniProtKB-KW"/>
</dbReference>
<dbReference type="GO" id="GO:0051304">
    <property type="term" value="P:chromosome separation"/>
    <property type="evidence" value="ECO:0007669"/>
    <property type="project" value="InterPro"/>
</dbReference>
<dbReference type="GO" id="GO:0006260">
    <property type="term" value="P:DNA replication"/>
    <property type="evidence" value="ECO:0007669"/>
    <property type="project" value="UniProtKB-UniRule"/>
</dbReference>
<dbReference type="Gene3D" id="1.10.10.10">
    <property type="entry name" value="Winged helix-like DNA-binding domain superfamily/Winged helix DNA-binding domain"/>
    <property type="match status" value="2"/>
</dbReference>
<dbReference type="HAMAP" id="MF_01804">
    <property type="entry name" value="ScpB"/>
    <property type="match status" value="1"/>
</dbReference>
<dbReference type="InterPro" id="IPR005234">
    <property type="entry name" value="ScpB_csome_segregation"/>
</dbReference>
<dbReference type="InterPro" id="IPR036388">
    <property type="entry name" value="WH-like_DNA-bd_sf"/>
</dbReference>
<dbReference type="InterPro" id="IPR036390">
    <property type="entry name" value="WH_DNA-bd_sf"/>
</dbReference>
<dbReference type="NCBIfam" id="TIGR00281">
    <property type="entry name" value="SMC-Scp complex subunit ScpB"/>
    <property type="match status" value="1"/>
</dbReference>
<dbReference type="PANTHER" id="PTHR34298">
    <property type="entry name" value="SEGREGATION AND CONDENSATION PROTEIN B"/>
    <property type="match status" value="1"/>
</dbReference>
<dbReference type="PANTHER" id="PTHR34298:SF2">
    <property type="entry name" value="SEGREGATION AND CONDENSATION PROTEIN B"/>
    <property type="match status" value="1"/>
</dbReference>
<dbReference type="Pfam" id="PF04079">
    <property type="entry name" value="SMC_ScpB"/>
    <property type="match status" value="1"/>
</dbReference>
<dbReference type="PIRSF" id="PIRSF019345">
    <property type="entry name" value="ScpB"/>
    <property type="match status" value="1"/>
</dbReference>
<dbReference type="SUPFAM" id="SSF46785">
    <property type="entry name" value="Winged helix' DNA-binding domain"/>
    <property type="match status" value="2"/>
</dbReference>
<proteinExistence type="inferred from homology"/>
<sequence>MDRTEQKSIIEGLLFVSGDEGIYPEQIAKVLEIEGNEVIDILEEMQKECEGAHRGLQIVQYAKVYRFATKKEHASYYQKLIEIPTAASLSQAALETLAIVAYRQPITRTEMEEIRGVKTDKALQTLVSHLLIKEMGRAEGPGRPILYGTTKEFLDTFGLKTLDDLPPLSEENEQMNEADLFFGSLQEISK</sequence>
<accession>B7JL36</accession>
<comment type="function">
    <text evidence="1">Participates in chromosomal partition during cell division. May act via the formation of a condensin-like complex containing Smc and ScpA that pull DNA away from mid-cell into both cell halves.</text>
</comment>
<comment type="subunit">
    <text evidence="1">Homodimer. Homodimerization may be required to stabilize the binding of ScpA to the Smc head domains. Component of a cohesin-like complex composed of ScpA, ScpB and the Smc homodimer, in which ScpA and ScpB bind to the head domain of Smc. The presence of the three proteins is required for the association of the complex with DNA.</text>
</comment>
<comment type="subcellular location">
    <subcellularLocation>
        <location evidence="1">Cytoplasm</location>
    </subcellularLocation>
    <text evidence="1">Associated with two foci at the outer edges of the nucleoid region in young cells, and at four foci within both cell halves in older cells.</text>
</comment>
<comment type="similarity">
    <text evidence="1">Belongs to the ScpB family.</text>
</comment>
<name>SCPB_BACC0</name>
<keyword id="KW-0131">Cell cycle</keyword>
<keyword id="KW-0132">Cell division</keyword>
<keyword id="KW-0159">Chromosome partition</keyword>
<keyword id="KW-0963">Cytoplasm</keyword>
<organism>
    <name type="scientific">Bacillus cereus (strain AH820)</name>
    <dbReference type="NCBI Taxonomy" id="405535"/>
    <lineage>
        <taxon>Bacteria</taxon>
        <taxon>Bacillati</taxon>
        <taxon>Bacillota</taxon>
        <taxon>Bacilli</taxon>
        <taxon>Bacillales</taxon>
        <taxon>Bacillaceae</taxon>
        <taxon>Bacillus</taxon>
        <taxon>Bacillus cereus group</taxon>
    </lineage>
</organism>
<feature type="chain" id="PRO_1000187526" description="Segregation and condensation protein B">
    <location>
        <begin position="1"/>
        <end position="190"/>
    </location>
</feature>
<evidence type="ECO:0000255" key="1">
    <source>
        <dbReference type="HAMAP-Rule" id="MF_01804"/>
    </source>
</evidence>
<gene>
    <name evidence="1" type="primary">scpB</name>
    <name type="ordered locus">BCAH820_4077</name>
</gene>
<protein>
    <recommendedName>
        <fullName evidence="1">Segregation and condensation protein B</fullName>
    </recommendedName>
</protein>